<gene>
    <name evidence="1" type="primary">thiG</name>
</gene>
<dbReference type="EC" id="2.8.1.10" evidence="1"/>
<dbReference type="EMBL" id="AP006715">
    <property type="protein sequence ID" value="BAE92485.1"/>
    <property type="molecule type" value="Genomic_DNA"/>
</dbReference>
<dbReference type="RefSeq" id="YP_537042.1">
    <property type="nucleotide sequence ID" value="NC_007932.1"/>
</dbReference>
<dbReference type="SMR" id="Q1XDC6"/>
<dbReference type="GeneID" id="3978777"/>
<dbReference type="UniPathway" id="UPA00060"/>
<dbReference type="GO" id="GO:0009507">
    <property type="term" value="C:chloroplast"/>
    <property type="evidence" value="ECO:0007669"/>
    <property type="project" value="UniProtKB-SubCell"/>
</dbReference>
<dbReference type="GO" id="GO:1990107">
    <property type="term" value="F:thiazole synthase activity"/>
    <property type="evidence" value="ECO:0007669"/>
    <property type="project" value="UniProtKB-EC"/>
</dbReference>
<dbReference type="GO" id="GO:0009229">
    <property type="term" value="P:thiamine diphosphate biosynthetic process"/>
    <property type="evidence" value="ECO:0007669"/>
    <property type="project" value="UniProtKB-UniRule"/>
</dbReference>
<dbReference type="CDD" id="cd04728">
    <property type="entry name" value="ThiG"/>
    <property type="match status" value="1"/>
</dbReference>
<dbReference type="Gene3D" id="3.20.20.70">
    <property type="entry name" value="Aldolase class I"/>
    <property type="match status" value="1"/>
</dbReference>
<dbReference type="HAMAP" id="MF_00443">
    <property type="entry name" value="ThiG"/>
    <property type="match status" value="1"/>
</dbReference>
<dbReference type="InterPro" id="IPR013785">
    <property type="entry name" value="Aldolase_TIM"/>
</dbReference>
<dbReference type="InterPro" id="IPR033983">
    <property type="entry name" value="Thiazole_synthase_ThiG"/>
</dbReference>
<dbReference type="InterPro" id="IPR008867">
    <property type="entry name" value="ThiG"/>
</dbReference>
<dbReference type="PANTHER" id="PTHR34266">
    <property type="entry name" value="THIAZOLE SYNTHASE"/>
    <property type="match status" value="1"/>
</dbReference>
<dbReference type="PANTHER" id="PTHR34266:SF2">
    <property type="entry name" value="THIAZOLE SYNTHASE"/>
    <property type="match status" value="1"/>
</dbReference>
<dbReference type="Pfam" id="PF05690">
    <property type="entry name" value="ThiG"/>
    <property type="match status" value="1"/>
</dbReference>
<dbReference type="SUPFAM" id="SSF110399">
    <property type="entry name" value="ThiG-like"/>
    <property type="match status" value="1"/>
</dbReference>
<reference key="1">
    <citation type="submission" date="2003-11" db="EMBL/GenBank/DDBJ databases">
        <title>Whole genome sequence of Porphyra yezoensis chloroplast.</title>
        <authorList>
            <person name="Kunimoto M."/>
            <person name="Morishima K."/>
            <person name="Yoshikawa M."/>
            <person name="Fukuda S."/>
            <person name="Kobayashi T."/>
            <person name="Kobayashi M."/>
            <person name="Okazaki T."/>
            <person name="Ohara I."/>
            <person name="Nakayama I."/>
        </authorList>
    </citation>
    <scope>NUCLEOTIDE SEQUENCE [LARGE SCALE GENOMIC DNA]</scope>
    <source>
        <strain>U-51</strain>
    </source>
</reference>
<geneLocation type="chloroplast"/>
<sequence length="277" mass="29753">MKQSFSRPHFENQELDSLKIGEKIFNSRLMVGTGKYNNLKEAIKSIDYSGANIVTVAIRRAQNSKNLGRSNLLDGLDWSKLWILPNTAGCESAEEAVRIAALGREIVKKLGQTDNNFIKLEVIPDSHYLFPDPIGTLKAAEYLVKKGFIVMPYIGADPVLAKQLENIGCATVMPLASPIGSGQGLKNLLNLKIIIENSNIPVIIDAGIGTPSEAAKVMEMGASGVLVNTAIARAPNSPQMAKAMSLAVKSGRLTHTAGRMIINQTANPSSPIFGISK</sequence>
<comment type="function">
    <text evidence="1">Catalyzes the rearrangement of 1-deoxy-D-xylulose 5-phosphate (DXP) to produce the thiazole phosphate moiety of thiamine. Sulfur is provided by the thiocarboxylate moiety of the carrier protein ThiS. In vitro, sulfur can be provided by H(2)S.</text>
</comment>
<comment type="catalytic activity">
    <reaction evidence="1">
        <text>[ThiS sulfur-carrier protein]-C-terminal-Gly-aminoethanethioate + 2-iminoacetate + 1-deoxy-D-xylulose 5-phosphate = [ThiS sulfur-carrier protein]-C-terminal Gly-Gly + 2-[(2R,5Z)-2-carboxy-4-methylthiazol-5(2H)-ylidene]ethyl phosphate + 2 H2O + H(+)</text>
        <dbReference type="Rhea" id="RHEA:26297"/>
        <dbReference type="Rhea" id="RHEA-COMP:12909"/>
        <dbReference type="Rhea" id="RHEA-COMP:19908"/>
        <dbReference type="ChEBI" id="CHEBI:15377"/>
        <dbReference type="ChEBI" id="CHEBI:15378"/>
        <dbReference type="ChEBI" id="CHEBI:57792"/>
        <dbReference type="ChEBI" id="CHEBI:62899"/>
        <dbReference type="ChEBI" id="CHEBI:77846"/>
        <dbReference type="ChEBI" id="CHEBI:90778"/>
        <dbReference type="ChEBI" id="CHEBI:232372"/>
        <dbReference type="EC" id="2.8.1.10"/>
    </reaction>
</comment>
<comment type="pathway">
    <text evidence="1">Cofactor biosynthesis; thiamine diphosphate biosynthesis.</text>
</comment>
<comment type="subunit">
    <text evidence="1">Homotetramer. Forms heterodimers with either ThiH or ThiS.</text>
</comment>
<comment type="subcellular location">
    <subcellularLocation>
        <location>Plastid</location>
        <location>Chloroplast</location>
    </subcellularLocation>
</comment>
<comment type="similarity">
    <text evidence="1">Belongs to the ThiG family.</text>
</comment>
<name>THIG_PYRYE</name>
<feature type="chain" id="PRO_0000276565" description="Thiazole synthase">
    <location>
        <begin position="1"/>
        <end position="277"/>
    </location>
</feature>
<feature type="active site" description="Schiff-base intermediate with DXP" evidence="1">
    <location>
        <position position="119"/>
    </location>
</feature>
<feature type="binding site" evidence="1">
    <location>
        <position position="180"/>
    </location>
    <ligand>
        <name>1-deoxy-D-xylulose 5-phosphate</name>
        <dbReference type="ChEBI" id="CHEBI:57792"/>
    </ligand>
</feature>
<feature type="binding site" evidence="1">
    <location>
        <begin position="206"/>
        <end position="207"/>
    </location>
    <ligand>
        <name>1-deoxy-D-xylulose 5-phosphate</name>
        <dbReference type="ChEBI" id="CHEBI:57792"/>
    </ligand>
</feature>
<feature type="binding site" evidence="1">
    <location>
        <begin position="228"/>
        <end position="229"/>
    </location>
    <ligand>
        <name>1-deoxy-D-xylulose 5-phosphate</name>
        <dbReference type="ChEBI" id="CHEBI:57792"/>
    </ligand>
</feature>
<evidence type="ECO:0000255" key="1">
    <source>
        <dbReference type="HAMAP-Rule" id="MF_00443"/>
    </source>
</evidence>
<organism>
    <name type="scientific">Pyropia yezoensis</name>
    <name type="common">Susabi-nori</name>
    <name type="synonym">Porphyra yezoensis</name>
    <dbReference type="NCBI Taxonomy" id="2788"/>
    <lineage>
        <taxon>Eukaryota</taxon>
        <taxon>Rhodophyta</taxon>
        <taxon>Bangiophyceae</taxon>
        <taxon>Bangiales</taxon>
        <taxon>Bangiaceae</taxon>
        <taxon>Pyropia</taxon>
    </lineage>
</organism>
<keyword id="KW-0150">Chloroplast</keyword>
<keyword id="KW-0934">Plastid</keyword>
<keyword id="KW-0704">Schiff base</keyword>
<keyword id="KW-0784">Thiamine biosynthesis</keyword>
<keyword id="KW-0808">Transferase</keyword>
<proteinExistence type="inferred from homology"/>
<accession>Q1XDC6</accession>
<protein>
    <recommendedName>
        <fullName evidence="1">Thiazole synthase</fullName>
        <ecNumber evidence="1">2.8.1.10</ecNumber>
    </recommendedName>
</protein>